<feature type="chain" id="PRO_0000073850" description="Calcium-binding protein P">
    <location>
        <begin position="1"/>
        <end position="467"/>
    </location>
</feature>
<feature type="domain" description="EF-hand 1" evidence="1">
    <location>
        <begin position="399"/>
        <end position="434"/>
    </location>
</feature>
<feature type="domain" description="EF-hand 2" evidence="1">
    <location>
        <begin position="435"/>
        <end position="467"/>
    </location>
</feature>
<feature type="region of interest" description="Disordered" evidence="2">
    <location>
        <begin position="1"/>
        <end position="311"/>
    </location>
</feature>
<feature type="short sequence motif" description="XYPPX">
    <location>
        <begin position="45"/>
        <end position="49"/>
    </location>
</feature>
<feature type="short sequence motif" description="XYPPX">
    <location>
        <begin position="75"/>
        <end position="79"/>
    </location>
</feature>
<feature type="short sequence motif" description="XYPPX">
    <location>
        <begin position="83"/>
        <end position="87"/>
    </location>
</feature>
<feature type="short sequence motif" description="XYPPX">
    <location>
        <begin position="94"/>
        <end position="98"/>
    </location>
</feature>
<feature type="short sequence motif" description="XYPPX">
    <location>
        <begin position="104"/>
        <end position="108"/>
    </location>
</feature>
<feature type="short sequence motif" description="XYPPX">
    <location>
        <begin position="115"/>
        <end position="119"/>
    </location>
</feature>
<feature type="short sequence motif" description="XYPPX">
    <location>
        <begin position="125"/>
        <end position="129"/>
    </location>
</feature>
<feature type="short sequence motif" description="XYPPX">
    <location>
        <begin position="136"/>
        <end position="140"/>
    </location>
</feature>
<feature type="short sequence motif" description="XYPPX">
    <location>
        <begin position="146"/>
        <end position="150"/>
    </location>
</feature>
<feature type="short sequence motif" description="XYPPX">
    <location>
        <begin position="157"/>
        <end position="161"/>
    </location>
</feature>
<feature type="short sequence motif" description="XYPPX">
    <location>
        <begin position="165"/>
        <end position="169"/>
    </location>
</feature>
<feature type="short sequence motif" description="XYPPX">
    <location>
        <begin position="176"/>
        <end position="180"/>
    </location>
</feature>
<feature type="short sequence motif" description="XYPPX">
    <location>
        <begin position="187"/>
        <end position="191"/>
    </location>
</feature>
<feature type="short sequence motif" description="XYPPX">
    <location>
        <begin position="221"/>
        <end position="225"/>
    </location>
</feature>
<feature type="short sequence motif" description="XYPPX">
    <location>
        <begin position="238"/>
        <end position="242"/>
    </location>
</feature>
<feature type="short sequence motif" description="XYPPX">
    <location>
        <begin position="247"/>
        <end position="251"/>
    </location>
</feature>
<feature type="short sequence motif" description="XYPPX">
    <location>
        <begin position="256"/>
        <end position="260"/>
    </location>
</feature>
<feature type="short sequence motif" description="XYPPX">
    <location>
        <begin position="275"/>
        <end position="279"/>
    </location>
</feature>
<feature type="compositionally biased region" description="Pro residues" evidence="2">
    <location>
        <begin position="1"/>
        <end position="10"/>
    </location>
</feature>
<feature type="compositionally biased region" description="Pro residues" evidence="2">
    <location>
        <begin position="45"/>
        <end position="62"/>
    </location>
</feature>
<feature type="compositionally biased region" description="Low complexity" evidence="2">
    <location>
        <begin position="63"/>
        <end position="74"/>
    </location>
</feature>
<feature type="compositionally biased region" description="Pro residues" evidence="2">
    <location>
        <begin position="75"/>
        <end position="109"/>
    </location>
</feature>
<feature type="compositionally biased region" description="Pro residues" evidence="2">
    <location>
        <begin position="118"/>
        <end position="131"/>
    </location>
</feature>
<feature type="compositionally biased region" description="Low complexity" evidence="2">
    <location>
        <begin position="132"/>
        <end position="145"/>
    </location>
</feature>
<feature type="compositionally biased region" description="Low complexity" evidence="2">
    <location>
        <begin position="153"/>
        <end position="193"/>
    </location>
</feature>
<feature type="compositionally biased region" description="Low complexity" evidence="2">
    <location>
        <begin position="215"/>
        <end position="246"/>
    </location>
</feature>
<feature type="compositionally biased region" description="Low complexity" evidence="2">
    <location>
        <begin position="253"/>
        <end position="311"/>
    </location>
</feature>
<feature type="binding site" evidence="1">
    <location>
        <position position="412"/>
    </location>
    <ligand>
        <name>Ca(2+)</name>
        <dbReference type="ChEBI" id="CHEBI:29108"/>
    </ligand>
</feature>
<feature type="binding site" evidence="1">
    <location>
        <position position="414"/>
    </location>
    <ligand>
        <name>Ca(2+)</name>
        <dbReference type="ChEBI" id="CHEBI:29108"/>
    </ligand>
</feature>
<feature type="binding site" evidence="1">
    <location>
        <position position="416"/>
    </location>
    <ligand>
        <name>Ca(2+)</name>
        <dbReference type="ChEBI" id="CHEBI:29108"/>
    </ligand>
</feature>
<feature type="binding site" evidence="1">
    <location>
        <position position="418"/>
    </location>
    <ligand>
        <name>Ca(2+)</name>
        <dbReference type="ChEBI" id="CHEBI:29108"/>
    </ligand>
</feature>
<feature type="binding site" evidence="1">
    <location>
        <position position="423"/>
    </location>
    <ligand>
        <name>Ca(2+)</name>
        <dbReference type="ChEBI" id="CHEBI:29108"/>
    </ligand>
</feature>
<feature type="sequence conflict" description="In Ref. 1; AAA03471." evidence="3" ref="1">
    <original>S</original>
    <variation>P</variation>
    <location>
        <position position="182"/>
    </location>
</feature>
<protein>
    <recommendedName>
        <fullName>Calcium-binding protein P</fullName>
    </recommendedName>
</protein>
<evidence type="ECO:0000255" key="1">
    <source>
        <dbReference type="PROSITE-ProRule" id="PRU00448"/>
    </source>
</evidence>
<evidence type="ECO:0000256" key="2">
    <source>
        <dbReference type="SAM" id="MobiDB-lite"/>
    </source>
</evidence>
<evidence type="ECO:0000305" key="3"/>
<gene>
    <name type="primary">cbpP</name>
    <name type="synonym">cbpA</name>
    <name type="ORF">DDB_G0277909</name>
</gene>
<accession>P35085</accession>
<accession>Q54YX2</accession>
<dbReference type="EMBL" id="U03413">
    <property type="protein sequence ID" value="AAA03471.1"/>
    <property type="molecule type" value="mRNA"/>
</dbReference>
<dbReference type="EMBL" id="AAFI02000023">
    <property type="protein sequence ID" value="EAL68127.1"/>
    <property type="molecule type" value="Genomic_DNA"/>
</dbReference>
<dbReference type="RefSeq" id="XP_642080.1">
    <property type="nucleotide sequence ID" value="XM_636988.1"/>
</dbReference>
<dbReference type="FunCoup" id="P35085">
    <property type="interactions" value="131"/>
</dbReference>
<dbReference type="STRING" id="44689.P35085"/>
<dbReference type="GlyGen" id="P35085">
    <property type="glycosylation" value="1 site"/>
</dbReference>
<dbReference type="PaxDb" id="44689-DDB0214957"/>
<dbReference type="EnsemblProtists" id="EAL68127">
    <property type="protein sequence ID" value="EAL68127"/>
    <property type="gene ID" value="DDB_G0277909"/>
</dbReference>
<dbReference type="GeneID" id="8621293"/>
<dbReference type="KEGG" id="ddi:DDB_G0277909"/>
<dbReference type="dictyBase" id="DDB_G0277909">
    <property type="gene designation" value="cbpP"/>
</dbReference>
<dbReference type="VEuPathDB" id="AmoebaDB:DDB_G0277909"/>
<dbReference type="eggNOG" id="ENOG502SEZH">
    <property type="taxonomic scope" value="Eukaryota"/>
</dbReference>
<dbReference type="HOGENOM" id="CLU_585850_0_0_1"/>
<dbReference type="InParanoid" id="P35085"/>
<dbReference type="OMA" id="GAMPGAY"/>
<dbReference type="PRO" id="PR:P35085"/>
<dbReference type="Proteomes" id="UP000002195">
    <property type="component" value="Chromosome 3"/>
</dbReference>
<dbReference type="GO" id="GO:0005509">
    <property type="term" value="F:calcium ion binding"/>
    <property type="evidence" value="ECO:0007669"/>
    <property type="project" value="InterPro"/>
</dbReference>
<dbReference type="CDD" id="cd00051">
    <property type="entry name" value="EFh"/>
    <property type="match status" value="1"/>
</dbReference>
<dbReference type="Gene3D" id="1.10.238.10">
    <property type="entry name" value="EF-hand"/>
    <property type="match status" value="1"/>
</dbReference>
<dbReference type="InterPro" id="IPR011992">
    <property type="entry name" value="EF-hand-dom_pair"/>
</dbReference>
<dbReference type="InterPro" id="IPR018247">
    <property type="entry name" value="EF_Hand_1_Ca_BS"/>
</dbReference>
<dbReference type="InterPro" id="IPR002048">
    <property type="entry name" value="EF_hand_dom"/>
</dbReference>
<dbReference type="Pfam" id="PF13499">
    <property type="entry name" value="EF-hand_7"/>
    <property type="match status" value="1"/>
</dbReference>
<dbReference type="SMART" id="SM00054">
    <property type="entry name" value="EFh"/>
    <property type="match status" value="2"/>
</dbReference>
<dbReference type="SUPFAM" id="SSF47473">
    <property type="entry name" value="EF-hand"/>
    <property type="match status" value="1"/>
</dbReference>
<dbReference type="PROSITE" id="PS00018">
    <property type="entry name" value="EF_HAND_1"/>
    <property type="match status" value="1"/>
</dbReference>
<dbReference type="PROSITE" id="PS50222">
    <property type="entry name" value="EF_HAND_2"/>
    <property type="match status" value="2"/>
</dbReference>
<reference key="1">
    <citation type="submission" date="1993-11" db="EMBL/GenBank/DDBJ databases">
        <authorList>
            <person name="Wennington R."/>
            <person name="Greenwood M."/>
            <person name="Tsang A."/>
        </authorList>
    </citation>
    <scope>NUCLEOTIDE SEQUENCE [MRNA]</scope>
    <source>
        <strain>AX2</strain>
    </source>
</reference>
<reference key="2">
    <citation type="journal article" date="2005" name="Nature">
        <title>The genome of the social amoeba Dictyostelium discoideum.</title>
        <authorList>
            <person name="Eichinger L."/>
            <person name="Pachebat J.A."/>
            <person name="Gloeckner G."/>
            <person name="Rajandream M.A."/>
            <person name="Sucgang R."/>
            <person name="Berriman M."/>
            <person name="Song J."/>
            <person name="Olsen R."/>
            <person name="Szafranski K."/>
            <person name="Xu Q."/>
            <person name="Tunggal B."/>
            <person name="Kummerfeld S."/>
            <person name="Madera M."/>
            <person name="Konfortov B.A."/>
            <person name="Rivero F."/>
            <person name="Bankier A.T."/>
            <person name="Lehmann R."/>
            <person name="Hamlin N."/>
            <person name="Davies R."/>
            <person name="Gaudet P."/>
            <person name="Fey P."/>
            <person name="Pilcher K."/>
            <person name="Chen G."/>
            <person name="Saunders D."/>
            <person name="Sodergren E.J."/>
            <person name="Davis P."/>
            <person name="Kerhornou A."/>
            <person name="Nie X."/>
            <person name="Hall N."/>
            <person name="Anjard C."/>
            <person name="Hemphill L."/>
            <person name="Bason N."/>
            <person name="Farbrother P."/>
            <person name="Desany B."/>
            <person name="Just E."/>
            <person name="Morio T."/>
            <person name="Rost R."/>
            <person name="Churcher C.M."/>
            <person name="Cooper J."/>
            <person name="Haydock S."/>
            <person name="van Driessche N."/>
            <person name="Cronin A."/>
            <person name="Goodhead I."/>
            <person name="Muzny D.M."/>
            <person name="Mourier T."/>
            <person name="Pain A."/>
            <person name="Lu M."/>
            <person name="Harper D."/>
            <person name="Lindsay R."/>
            <person name="Hauser H."/>
            <person name="James K.D."/>
            <person name="Quiles M."/>
            <person name="Madan Babu M."/>
            <person name="Saito T."/>
            <person name="Buchrieser C."/>
            <person name="Wardroper A."/>
            <person name="Felder M."/>
            <person name="Thangavelu M."/>
            <person name="Johnson D."/>
            <person name="Knights A."/>
            <person name="Loulseged H."/>
            <person name="Mungall K.L."/>
            <person name="Oliver K."/>
            <person name="Price C."/>
            <person name="Quail M.A."/>
            <person name="Urushihara H."/>
            <person name="Hernandez J."/>
            <person name="Rabbinowitsch E."/>
            <person name="Steffen D."/>
            <person name="Sanders M."/>
            <person name="Ma J."/>
            <person name="Kohara Y."/>
            <person name="Sharp S."/>
            <person name="Simmonds M.N."/>
            <person name="Spiegler S."/>
            <person name="Tivey A."/>
            <person name="Sugano S."/>
            <person name="White B."/>
            <person name="Walker D."/>
            <person name="Woodward J.R."/>
            <person name="Winckler T."/>
            <person name="Tanaka Y."/>
            <person name="Shaulsky G."/>
            <person name="Schleicher M."/>
            <person name="Weinstock G.M."/>
            <person name="Rosenthal A."/>
            <person name="Cox E.C."/>
            <person name="Chisholm R.L."/>
            <person name="Gibbs R.A."/>
            <person name="Loomis W.F."/>
            <person name="Platzer M."/>
            <person name="Kay R.R."/>
            <person name="Williams J.G."/>
            <person name="Dear P.H."/>
            <person name="Noegel A.A."/>
            <person name="Barrell B.G."/>
            <person name="Kuspa A."/>
        </authorList>
    </citation>
    <scope>NUCLEOTIDE SEQUENCE [LARGE SCALE GENOMIC DNA]</scope>
    <source>
        <strain>AX4</strain>
    </source>
</reference>
<keyword id="KW-0106">Calcium</keyword>
<keyword id="KW-0479">Metal-binding</keyword>
<keyword id="KW-1185">Reference proteome</keyword>
<keyword id="KW-0677">Repeat</keyword>
<name>CBPP_DICDI</name>
<organism>
    <name type="scientific">Dictyostelium discoideum</name>
    <name type="common">Social amoeba</name>
    <dbReference type="NCBI Taxonomy" id="44689"/>
    <lineage>
        <taxon>Eukaryota</taxon>
        <taxon>Amoebozoa</taxon>
        <taxon>Evosea</taxon>
        <taxon>Eumycetozoa</taxon>
        <taxon>Dictyostelia</taxon>
        <taxon>Dictyosteliales</taxon>
        <taxon>Dictyosteliaceae</taxon>
        <taxon>Dictyostelium</taxon>
    </lineage>
</organism>
<sequence>MQNPQNPPPAGSAADFYSQMPVKVMGTPGAPGSQSTPGAPGAPGQYPPQQPGAPGSNLPPYPGTQQPGAPGAPGQYPPQQPGQYPPQQPGAPGQYPPQQPGQPGYPPQQPGQSGQYPPQQPGQPGYPPQQPGAPGQYPPQQGQPGQYPPQQPGQPGQYPPQQQGQYPPQQPGQPGAYPPQQSGQPGAYPPQQGVQNTLAKTGAPGQPGVPPPQGAYPGQPGVPPQQGAYPGQQPPMGAYPPQGQPGAYPPQGQPGAYPPQQQQVAYPGQQPPMGAYPPQQGAYPGQQGAYPGQQGAYPGQQGAYPGQPPMGAYPGQQQYGVSAYSQTTAAYQTGAYPGQTPMGVYPGQTTAYAAYQTTAIGYGATSTYSYTRPTYSYATPYSRTAAFVVPVGLPPHVVQKMMAASAAFRIHDSNCSGTLSKKEFKKLIKHLGYYFSKGQTKMLFHSIDRDYSGSLSEREFVDWWSMQ</sequence>
<proteinExistence type="evidence at transcript level"/>